<reference key="1">
    <citation type="journal article" date="2003" name="Biochem. J.">
        <title>Snake venom disintegrins: novel dimeric disintegrins and structural diversification by disulphide bond engineering.</title>
        <authorList>
            <person name="Calvete J.J."/>
            <person name="Moreno-Murciano M.P."/>
            <person name="Theakston R.D.G."/>
            <person name="Kisiel D.G."/>
            <person name="Marcinkiewicz C."/>
        </authorList>
    </citation>
    <scope>PROTEIN SEQUENCE</scope>
    <scope>FUNCTION</scope>
    <scope>SUBUNIT</scope>
    <scope>SUBCELLULAR LOCATION</scope>
    <source>
        <tissue>Venom</tissue>
    </source>
</reference>
<sequence>NSGNPCCDPVTCQPRRGEHCVSGKCCRNCKFLRAGTVCKRAVGDDMDDYCTGISSDCPRNPYKD</sequence>
<keyword id="KW-1217">Cell adhesion impairing toxin</keyword>
<keyword id="KW-0903">Direct protein sequencing</keyword>
<keyword id="KW-1015">Disulfide bond</keyword>
<keyword id="KW-1199">Hemostasis impairing toxin</keyword>
<keyword id="KW-1201">Platelet aggregation inhibiting toxin</keyword>
<keyword id="KW-0964">Secreted</keyword>
<keyword id="KW-0800">Toxin</keyword>
<dbReference type="SMR" id="P0C6A9"/>
<dbReference type="GO" id="GO:0005576">
    <property type="term" value="C:extracellular region"/>
    <property type="evidence" value="ECO:0007669"/>
    <property type="project" value="UniProtKB-SubCell"/>
</dbReference>
<dbReference type="GO" id="GO:0090729">
    <property type="term" value="F:toxin activity"/>
    <property type="evidence" value="ECO:0007669"/>
    <property type="project" value="UniProtKB-KW"/>
</dbReference>
<dbReference type="Gene3D" id="4.10.70.10">
    <property type="entry name" value="Disintegrin domain"/>
    <property type="match status" value="1"/>
</dbReference>
<dbReference type="InterPro" id="IPR018358">
    <property type="entry name" value="Disintegrin_CS"/>
</dbReference>
<dbReference type="InterPro" id="IPR001762">
    <property type="entry name" value="Disintegrin_dom"/>
</dbReference>
<dbReference type="InterPro" id="IPR036436">
    <property type="entry name" value="Disintegrin_dom_sf"/>
</dbReference>
<dbReference type="PANTHER" id="PTHR11905">
    <property type="entry name" value="ADAM A DISINTEGRIN AND METALLOPROTEASE DOMAIN"/>
    <property type="match status" value="1"/>
</dbReference>
<dbReference type="PANTHER" id="PTHR11905:SF159">
    <property type="entry name" value="ADAM METALLOPROTEASE"/>
    <property type="match status" value="1"/>
</dbReference>
<dbReference type="Pfam" id="PF00200">
    <property type="entry name" value="Disintegrin"/>
    <property type="match status" value="1"/>
</dbReference>
<dbReference type="PRINTS" id="PR00289">
    <property type="entry name" value="DISINTEGRIN"/>
</dbReference>
<dbReference type="SMART" id="SM00050">
    <property type="entry name" value="DISIN"/>
    <property type="match status" value="1"/>
</dbReference>
<dbReference type="SUPFAM" id="SSF57552">
    <property type="entry name" value="Blood coagulation inhibitor (disintegrin)"/>
    <property type="match status" value="1"/>
</dbReference>
<dbReference type="PROSITE" id="PS00427">
    <property type="entry name" value="DISINTEGRIN_1"/>
    <property type="match status" value="1"/>
</dbReference>
<dbReference type="PROSITE" id="PS50214">
    <property type="entry name" value="DISINTEGRIN_2"/>
    <property type="match status" value="1"/>
</dbReference>
<proteinExistence type="evidence at protein level"/>
<organism>
    <name type="scientific">Macrovipera lebetina obtusa</name>
    <name type="common">Levant blunt-nosed viper</name>
    <name type="synonym">Vipera lebetina obtusa</name>
    <dbReference type="NCBI Taxonomy" id="209528"/>
    <lineage>
        <taxon>Eukaryota</taxon>
        <taxon>Metazoa</taxon>
        <taxon>Chordata</taxon>
        <taxon>Craniata</taxon>
        <taxon>Vertebrata</taxon>
        <taxon>Euteleostomi</taxon>
        <taxon>Lepidosauria</taxon>
        <taxon>Squamata</taxon>
        <taxon>Bifurcata</taxon>
        <taxon>Unidentata</taxon>
        <taxon>Episquamata</taxon>
        <taxon>Toxicofera</taxon>
        <taxon>Serpentes</taxon>
        <taxon>Colubroidea</taxon>
        <taxon>Viperidae</taxon>
        <taxon>Viperinae</taxon>
        <taxon>Macrovipera</taxon>
        <taxon>Macrovipera lebetinus</taxon>
    </lineage>
</organism>
<evidence type="ECO:0000250" key="1">
    <source>
        <dbReference type="UniProtKB" id="Q805F6"/>
    </source>
</evidence>
<evidence type="ECO:0000255" key="2">
    <source>
        <dbReference type="PROSITE-ProRule" id="PRU00068"/>
    </source>
</evidence>
<evidence type="ECO:0000269" key="3">
    <source>
    </source>
</evidence>
<evidence type="ECO:0000303" key="4">
    <source>
    </source>
</evidence>
<evidence type="ECO:0000305" key="5"/>
<evidence type="ECO:0000305" key="6">
    <source>
    </source>
</evidence>
<comment type="function">
    <text evidence="3">Poor inhibitor of platelet aggregation. The disintegrin inhibits the adhesion of the alpha-4/beta-1 (ITGA4/ITGB1) integrin to VCAM-1. Inhibition on alpha-IIb/beta-3 (ITGA2B/ITGB3) is low.</text>
</comment>
<comment type="subunit">
    <text evidence="3">Heterodimer with VLO5B; disulfide-linked.</text>
</comment>
<comment type="subcellular location">
    <subcellularLocation>
        <location evidence="3">Secreted</location>
    </subcellularLocation>
</comment>
<comment type="tissue specificity">
    <text evidence="6">Expressed by the venom gland.</text>
</comment>
<comment type="miscellaneous">
    <text evidence="6">Negative results: does not inhibit alpha-1/beta-1 (ITGA1/ITGB1), alpha-2/beta-1 (ITGA2/ITGB1) and alpha-6/beta-1 (ITGA6/ITGB1).</text>
</comment>
<comment type="miscellaneous">
    <text>The disintegrin belongs to the dimeric disintegrin subfamily.</text>
</comment>
<comment type="similarity">
    <text evidence="5">Belongs to the venom metalloproteinase (M12B) family. P-II subfamily. P-IIe sub-subfamily.</text>
</comment>
<accession>P0C6A9</accession>
<protein>
    <recommendedName>
        <fullName evidence="4">Disintegrin VLO5A</fullName>
    </recommendedName>
</protein>
<feature type="chain" id="PRO_0000319024" description="Disintegrin VLO5A" evidence="3">
    <location>
        <begin position="1"/>
        <end position="64"/>
    </location>
</feature>
<feature type="domain" description="Disintegrin" evidence="2">
    <location>
        <begin position="1"/>
        <end position="64"/>
    </location>
</feature>
<feature type="short sequence motif" description="Cell attachment site; atypical (VGD)">
    <location>
        <begin position="42"/>
        <end position="44"/>
    </location>
</feature>
<feature type="disulfide bond" evidence="1">
    <location>
        <begin position="6"/>
        <end position="29"/>
    </location>
</feature>
<feature type="disulfide bond" description="Interchain (with C-8 in VLO5B)" evidence="1">
    <location>
        <position position="7"/>
    </location>
</feature>
<feature type="disulfide bond" description="Interchain (with C-13 in VLO5B)" evidence="1">
    <location>
        <position position="12"/>
    </location>
</feature>
<feature type="disulfide bond" evidence="1">
    <location>
        <begin position="20"/>
        <end position="26"/>
    </location>
</feature>
<feature type="disulfide bond" evidence="1">
    <location>
        <begin position="25"/>
        <end position="50"/>
    </location>
</feature>
<feature type="disulfide bond" evidence="1 2">
    <location>
        <begin position="38"/>
        <end position="57"/>
    </location>
</feature>
<name>VM25A_MACLO</name>